<feature type="chain" id="PRO_0000341976" description="Protein transport protein Sec16B">
    <location>
        <begin position="1"/>
        <end position="1045"/>
    </location>
</feature>
<feature type="region of interest" description="Disordered" evidence="5">
    <location>
        <begin position="1"/>
        <end position="78"/>
    </location>
</feature>
<feature type="region of interest" description="Disordered" evidence="5">
    <location>
        <begin position="149"/>
        <end position="193"/>
    </location>
</feature>
<feature type="region of interest" description="Central conserved domain (CCD); required for localization to endoplasmic reticulum exit sites" evidence="4">
    <location>
        <begin position="267"/>
        <end position="711"/>
    </location>
</feature>
<feature type="region of interest" description="Disordered" evidence="5">
    <location>
        <begin position="707"/>
        <end position="733"/>
    </location>
</feature>
<feature type="region of interest" description="Disordered" evidence="5">
    <location>
        <begin position="748"/>
        <end position="789"/>
    </location>
</feature>
<feature type="region of interest" description="Disordered" evidence="5">
    <location>
        <begin position="813"/>
        <end position="1045"/>
    </location>
</feature>
<feature type="compositionally biased region" description="Pro residues" evidence="5">
    <location>
        <begin position="1"/>
        <end position="13"/>
    </location>
</feature>
<feature type="compositionally biased region" description="Basic and acidic residues" evidence="5">
    <location>
        <begin position="22"/>
        <end position="33"/>
    </location>
</feature>
<feature type="compositionally biased region" description="Polar residues" evidence="5">
    <location>
        <begin position="50"/>
        <end position="60"/>
    </location>
</feature>
<feature type="compositionally biased region" description="Basic and acidic residues" evidence="5">
    <location>
        <begin position="149"/>
        <end position="168"/>
    </location>
</feature>
<feature type="compositionally biased region" description="Low complexity" evidence="5">
    <location>
        <begin position="773"/>
        <end position="784"/>
    </location>
</feature>
<feature type="compositionally biased region" description="Acidic residues" evidence="5">
    <location>
        <begin position="916"/>
        <end position="926"/>
    </location>
</feature>
<feature type="compositionally biased region" description="Pro residues" evidence="5">
    <location>
        <begin position="942"/>
        <end position="953"/>
    </location>
</feature>
<feature type="compositionally biased region" description="Gly residues" evidence="5">
    <location>
        <begin position="957"/>
        <end position="966"/>
    </location>
</feature>
<feature type="compositionally biased region" description="Polar residues" evidence="5">
    <location>
        <begin position="989"/>
        <end position="998"/>
    </location>
</feature>
<feature type="modified residue" description="Phosphoserine" evidence="4">
    <location>
        <position position="55"/>
    </location>
</feature>
<feature type="modified residue" description="Phosphoserine" evidence="2">
    <location>
        <position position="137"/>
    </location>
</feature>
<feature type="modified residue" description="Phosphoserine" evidence="3">
    <location>
        <position position="186"/>
    </location>
</feature>
<feature type="modified residue" description="Phosphoserine" evidence="2">
    <location>
        <position position="852"/>
    </location>
</feature>
<feature type="modified residue" description="Phosphoserine" evidence="3">
    <location>
        <position position="858"/>
    </location>
</feature>
<feature type="modified residue" description="Phosphoserine" evidence="3">
    <location>
        <position position="866"/>
    </location>
</feature>
<feature type="modified residue" description="Phosphoserine" evidence="3">
    <location>
        <position position="867"/>
    </location>
</feature>
<gene>
    <name type="primary">SEC16B</name>
    <name type="synonym">RGPR</name>
</gene>
<dbReference type="EMBL" id="AB185244">
    <property type="protein sequence ID" value="BAD30088.1"/>
    <property type="molecule type" value="mRNA"/>
</dbReference>
<dbReference type="RefSeq" id="NP_001075483.1">
    <property type="nucleotide sequence ID" value="NM_001082014.1"/>
</dbReference>
<dbReference type="SMR" id="Q6BCB4"/>
<dbReference type="FunCoup" id="Q6BCB4">
    <property type="interactions" value="316"/>
</dbReference>
<dbReference type="STRING" id="9986.ENSOCUP00000004518"/>
<dbReference type="PaxDb" id="9986-ENSOCUP00000004518"/>
<dbReference type="GeneID" id="100008637"/>
<dbReference type="KEGG" id="ocu:100008637"/>
<dbReference type="CTD" id="89866"/>
<dbReference type="eggNOG" id="KOG1913">
    <property type="taxonomic scope" value="Eukaryota"/>
</dbReference>
<dbReference type="InParanoid" id="Q6BCB4"/>
<dbReference type="OrthoDB" id="8918678at2759"/>
<dbReference type="Proteomes" id="UP000001811">
    <property type="component" value="Unplaced"/>
</dbReference>
<dbReference type="GO" id="GO:0070971">
    <property type="term" value="C:endoplasmic reticulum exit site"/>
    <property type="evidence" value="ECO:0000250"/>
    <property type="project" value="UniProtKB"/>
</dbReference>
<dbReference type="GO" id="GO:0005789">
    <property type="term" value="C:endoplasmic reticulum membrane"/>
    <property type="evidence" value="ECO:0007669"/>
    <property type="project" value="UniProtKB-SubCell"/>
</dbReference>
<dbReference type="GO" id="GO:0012507">
    <property type="term" value="C:ER to Golgi transport vesicle membrane"/>
    <property type="evidence" value="ECO:0007669"/>
    <property type="project" value="TreeGrafter"/>
</dbReference>
<dbReference type="GO" id="GO:0000139">
    <property type="term" value="C:Golgi membrane"/>
    <property type="evidence" value="ECO:0007669"/>
    <property type="project" value="UniProtKB-SubCell"/>
</dbReference>
<dbReference type="GO" id="GO:0006888">
    <property type="term" value="P:endoplasmic reticulum to Golgi vesicle-mediated transport"/>
    <property type="evidence" value="ECO:0000250"/>
    <property type="project" value="UniProtKB"/>
</dbReference>
<dbReference type="GO" id="GO:0007030">
    <property type="term" value="P:Golgi organization"/>
    <property type="evidence" value="ECO:0007669"/>
    <property type="project" value="TreeGrafter"/>
</dbReference>
<dbReference type="GO" id="GO:0007031">
    <property type="term" value="P:peroxisome organization"/>
    <property type="evidence" value="ECO:0007669"/>
    <property type="project" value="UniProtKB-KW"/>
</dbReference>
<dbReference type="GO" id="GO:0070973">
    <property type="term" value="P:protein localization to endoplasmic reticulum exit site"/>
    <property type="evidence" value="ECO:0007669"/>
    <property type="project" value="TreeGrafter"/>
</dbReference>
<dbReference type="GO" id="GO:0015031">
    <property type="term" value="P:protein transport"/>
    <property type="evidence" value="ECO:0007669"/>
    <property type="project" value="UniProtKB-KW"/>
</dbReference>
<dbReference type="CDD" id="cd09233">
    <property type="entry name" value="ACE1-Sec16-like"/>
    <property type="match status" value="1"/>
</dbReference>
<dbReference type="FunFam" id="1.25.40.1030:FF:000003">
    <property type="entry name" value="Protein transport protein sec16"/>
    <property type="match status" value="1"/>
</dbReference>
<dbReference type="Gene3D" id="1.25.40.1030">
    <property type="match status" value="1"/>
</dbReference>
<dbReference type="InterPro" id="IPR024340">
    <property type="entry name" value="Sec16_CCD"/>
</dbReference>
<dbReference type="InterPro" id="IPR024298">
    <property type="entry name" value="Sec16_Sec23-bd"/>
</dbReference>
<dbReference type="PANTHER" id="PTHR13402:SF11">
    <property type="entry name" value="PROTEIN TRANSPORT PROTEIN SEC16B"/>
    <property type="match status" value="1"/>
</dbReference>
<dbReference type="PANTHER" id="PTHR13402">
    <property type="entry name" value="RGPR-RELATED"/>
    <property type="match status" value="1"/>
</dbReference>
<dbReference type="Pfam" id="PF12932">
    <property type="entry name" value="Sec16"/>
    <property type="match status" value="1"/>
</dbReference>
<dbReference type="Pfam" id="PF12931">
    <property type="entry name" value="TPR_Sec16"/>
    <property type="match status" value="1"/>
</dbReference>
<comment type="function">
    <text evidence="4">Plays a role in the organization of the endoplasmic reticulum exit sites (ERES), also known as transitional endoplasmic reticulum (tER). Required for secretory cargo traffic from the endoplasmic reticulum to the Golgi apparatus. Involved in peroxisome biogenesis. Regulates the transport of peroxisomal biogenesis factors PEX3 and PEX16 from the ER to peroxisomes.</text>
</comment>
<comment type="subunit">
    <text evidence="4">SEC16A and SEC16B are each present in multiple copies in a heteromeric complex. Interacts with TFG. Interacts with SEC13.</text>
</comment>
<comment type="subcellular location">
    <subcellularLocation>
        <location evidence="4">Endoplasmic reticulum membrane</location>
        <topology evidence="1">Peripheral membrane protein</topology>
    </subcellularLocation>
    <subcellularLocation>
        <location evidence="1">Golgi apparatus membrane</location>
        <topology evidence="1">Peripheral membrane protein</topology>
    </subcellularLocation>
    <text evidence="4">Localizes to endoplasmic reticulum exit sites (ERES), also known as transitional endoplasmic reticulum (tER).</text>
</comment>
<comment type="tissue specificity">
    <text evidence="6">Liver.</text>
</comment>
<comment type="similarity">
    <text evidence="7">Belongs to the SEC16 family.</text>
</comment>
<organism>
    <name type="scientific">Oryctolagus cuniculus</name>
    <name type="common">Rabbit</name>
    <dbReference type="NCBI Taxonomy" id="9986"/>
    <lineage>
        <taxon>Eukaryota</taxon>
        <taxon>Metazoa</taxon>
        <taxon>Chordata</taxon>
        <taxon>Craniata</taxon>
        <taxon>Vertebrata</taxon>
        <taxon>Euteleostomi</taxon>
        <taxon>Mammalia</taxon>
        <taxon>Eutheria</taxon>
        <taxon>Euarchontoglires</taxon>
        <taxon>Glires</taxon>
        <taxon>Lagomorpha</taxon>
        <taxon>Leporidae</taxon>
        <taxon>Oryctolagus</taxon>
    </lineage>
</organism>
<protein>
    <recommendedName>
        <fullName>Protein transport protein Sec16B</fullName>
    </recommendedName>
    <alternativeName>
        <fullName>Regucalcin gene promoter region-related protein p117</fullName>
        <shortName>RGPR-p117</shortName>
    </alternativeName>
    <alternativeName>
        <fullName>SEC16 homolog B</fullName>
    </alternativeName>
</protein>
<evidence type="ECO:0000250" key="1"/>
<evidence type="ECO:0000250" key="2">
    <source>
        <dbReference type="UniProtKB" id="Q75N33"/>
    </source>
</evidence>
<evidence type="ECO:0000250" key="3">
    <source>
        <dbReference type="UniProtKB" id="Q91XT4"/>
    </source>
</evidence>
<evidence type="ECO:0000250" key="4">
    <source>
        <dbReference type="UniProtKB" id="Q96JE7"/>
    </source>
</evidence>
<evidence type="ECO:0000256" key="5">
    <source>
        <dbReference type="SAM" id="MobiDB-lite"/>
    </source>
</evidence>
<evidence type="ECO:0000269" key="6">
    <source>
    </source>
</evidence>
<evidence type="ECO:0000305" key="7"/>
<name>SC16B_RABIT</name>
<reference key="1">
    <citation type="journal article" date="2005" name="Int. J. Mol. Med.">
        <title>A novel regucalcin gene promoter region-related protein: comparison of nucleotide and amino acid sequences in vertebrate species.</title>
        <authorList>
            <person name="Sawada N."/>
            <person name="Yamaguchi M."/>
        </authorList>
    </citation>
    <scope>NUCLEOTIDE SEQUENCE [MRNA]</scope>
</reference>
<reference key="2">
    <citation type="journal article" date="2002" name="J. Cell. Biochem.">
        <title>Gene expression for a novel protein RGPR-p117 in various species: the stimulation by intracellular signaling factors.</title>
        <authorList>
            <person name="Misawa H."/>
            <person name="Yamaguchi M."/>
        </authorList>
    </citation>
    <scope>TISSUE SPECIFICITY</scope>
</reference>
<keyword id="KW-0256">Endoplasmic reticulum</keyword>
<keyword id="KW-0931">ER-Golgi transport</keyword>
<keyword id="KW-0333">Golgi apparatus</keyword>
<keyword id="KW-0472">Membrane</keyword>
<keyword id="KW-0962">Peroxisome biogenesis</keyword>
<keyword id="KW-0597">Phosphoprotein</keyword>
<keyword id="KW-0653">Protein transport</keyword>
<keyword id="KW-1185">Reference proteome</keyword>
<keyword id="KW-0813">Transport</keyword>
<proteinExistence type="evidence at transcript level"/>
<sequence>MEPWVPQWPPPSRGRPRSPVPDSERGLQRDGYHRPAPHSWHNGERLPQWQDVQGSPQPQQDPRAGPQRPQHVPRLGAWQQHAPAVDYYEGGHRGQLYSRPSYESLYPALTEDYAYGSHYYHGHPQWQQEGRVPRQGSPYVWHDSYRDQRHLSEHRPENQSRTFRRDSETQFQRSNRRNPHKDGPASSSGQERPGELFAEGRLSWGLTSQPSLGSKSNLLQQREVGLSSSSYELSQYMVDAPELYDPAAAAGWRPVPAEDIPVAGPKAPKKFYIPHVSVGFGPRGQLVCVSPSSPMDGQTALVEVHSMEVILNDLEEQEEMRSFPGPLIREDVHKVDVMTFCQQKAAQSRKSGTPGGRDSALLWQLLVLLCRQNGSMAGSDIAELLLQDCKKLEKYKKQPPVANLINLADEDWPVLSSGPRNLLTGETPPSVETPAQVVGKFTQLLYYGRKKEALEWAMKNHLWGHALFLSSKMEPRTYKWVMSGFTSTLALNDPLQTLFQLLSGRIPQAATCCGDTQWGDWRPHLAVILSNQAGDPELRRRVIVSMGDTLASKGLVEAAHFCYLMAQVPFGHYTVNADRLALLGSSHSQEFPRFASAEAIQRTEVLEYCRTLGGRPGLIASFQVYKLLYASRLADYGLASQAFHYCEAIGTAVLSQAESSHPVLLVELIKLAERLKLADPLVLERRGGDEAWEPDWLQRLRRHQELQQKAAADAGEPHSANLDTPGATGTTESTFYQDLPAYQRFSDAPGCEPAPWPTPTQTGCPSPFPSQPGPAAGPAGAPVPLYSVPETHFPVSTEEPQAVGGQVWEDTRQTHSAPGENIASPETFQEPEGLEVISTPQELLAPRAQSFSESCPGSVKEADEESSDEAGRKSARSPAHTGKLADATASAKRSGFGWFSWFRSKPTENAPHSGDEDSSDSPDSEQENPRAPSPREAGLGLSPPPLLESPPLPGASAFGGGTGRGEAQGAMSSQETAAGTGTGGLSGPESASSELYSNPSVLLPPPSVKGAVPLYNPSQVPQLPTAAGLSRPNRLAQRRYPTQPC</sequence>
<accession>Q6BCB4</accession>